<proteinExistence type="inferred from homology"/>
<organism>
    <name type="scientific">Mycobacterium bovis (strain ATCC BAA-935 / AF2122/97)</name>
    <dbReference type="NCBI Taxonomy" id="233413"/>
    <lineage>
        <taxon>Bacteria</taxon>
        <taxon>Bacillati</taxon>
        <taxon>Actinomycetota</taxon>
        <taxon>Actinomycetes</taxon>
        <taxon>Mycobacteriales</taxon>
        <taxon>Mycobacteriaceae</taxon>
        <taxon>Mycobacterium</taxon>
        <taxon>Mycobacterium tuberculosis complex</taxon>
    </lineage>
</organism>
<comment type="function">
    <text evidence="1">Catalyzes the reversible transfer of the terminal phosphate of ATP to form a long-chain polyphosphate (polyP).</text>
</comment>
<comment type="catalytic activity">
    <reaction evidence="1">
        <text>[phosphate](n) + ATP = [phosphate](n+1) + ADP</text>
        <dbReference type="Rhea" id="RHEA:19573"/>
        <dbReference type="Rhea" id="RHEA-COMP:9859"/>
        <dbReference type="Rhea" id="RHEA-COMP:14280"/>
        <dbReference type="ChEBI" id="CHEBI:16838"/>
        <dbReference type="ChEBI" id="CHEBI:30616"/>
        <dbReference type="ChEBI" id="CHEBI:456216"/>
        <dbReference type="EC" id="2.7.4.1"/>
    </reaction>
</comment>
<comment type="cofactor">
    <cofactor evidence="1">
        <name>Mg(2+)</name>
        <dbReference type="ChEBI" id="CHEBI:18420"/>
    </cofactor>
</comment>
<comment type="PTM">
    <text evidence="1">An intermediate of this reaction is the autophosphorylated ppk in which a phosphate is covalently linked to a histidine residue through a N-P bond.</text>
</comment>
<comment type="similarity">
    <text evidence="1">Belongs to the polyphosphate kinase 1 (PPK1) family.</text>
</comment>
<dbReference type="EC" id="2.7.4.1" evidence="1"/>
<dbReference type="EMBL" id="LT708304">
    <property type="protein sequence ID" value="SIU01632.1"/>
    <property type="molecule type" value="Genomic_DNA"/>
</dbReference>
<dbReference type="RefSeq" id="NP_856653.1">
    <property type="nucleotide sequence ID" value="NC_002945.3"/>
</dbReference>
<dbReference type="RefSeq" id="WP_003415097.1">
    <property type="nucleotide sequence ID" value="NC_002945.4"/>
</dbReference>
<dbReference type="SMR" id="P65769"/>
<dbReference type="KEGG" id="mbo:BQ2027_MB3008"/>
<dbReference type="PATRIC" id="fig|233413.5.peg.3307"/>
<dbReference type="Proteomes" id="UP000001419">
    <property type="component" value="Chromosome"/>
</dbReference>
<dbReference type="GO" id="GO:0009358">
    <property type="term" value="C:polyphosphate kinase complex"/>
    <property type="evidence" value="ECO:0007669"/>
    <property type="project" value="InterPro"/>
</dbReference>
<dbReference type="GO" id="GO:0005524">
    <property type="term" value="F:ATP binding"/>
    <property type="evidence" value="ECO:0007669"/>
    <property type="project" value="UniProtKB-KW"/>
</dbReference>
<dbReference type="GO" id="GO:0046872">
    <property type="term" value="F:metal ion binding"/>
    <property type="evidence" value="ECO:0007669"/>
    <property type="project" value="UniProtKB-KW"/>
</dbReference>
<dbReference type="GO" id="GO:0008976">
    <property type="term" value="F:polyphosphate kinase activity"/>
    <property type="evidence" value="ECO:0007669"/>
    <property type="project" value="UniProtKB-UniRule"/>
</dbReference>
<dbReference type="GO" id="GO:0006799">
    <property type="term" value="P:polyphosphate biosynthetic process"/>
    <property type="evidence" value="ECO:0007669"/>
    <property type="project" value="UniProtKB-UniRule"/>
</dbReference>
<dbReference type="CDD" id="cd09165">
    <property type="entry name" value="PLDc_PaPPK1_C1_like"/>
    <property type="match status" value="1"/>
</dbReference>
<dbReference type="FunFam" id="1.20.58.310:FF:000002">
    <property type="entry name" value="Polyphosphate kinase"/>
    <property type="match status" value="1"/>
</dbReference>
<dbReference type="FunFam" id="3.30.1840.10:FF:000002">
    <property type="entry name" value="Polyphosphate kinase"/>
    <property type="match status" value="1"/>
</dbReference>
<dbReference type="FunFam" id="3.30.870.10:FF:000001">
    <property type="entry name" value="Polyphosphate kinase"/>
    <property type="match status" value="1"/>
</dbReference>
<dbReference type="Gene3D" id="3.30.870.10">
    <property type="entry name" value="Endonuclease Chain A"/>
    <property type="match status" value="2"/>
</dbReference>
<dbReference type="Gene3D" id="3.30.1840.10">
    <property type="entry name" value="Polyphosphate kinase middle domain"/>
    <property type="match status" value="1"/>
</dbReference>
<dbReference type="Gene3D" id="1.20.58.310">
    <property type="entry name" value="Polyphosphate kinase N-terminal domain"/>
    <property type="match status" value="1"/>
</dbReference>
<dbReference type="HAMAP" id="MF_00347">
    <property type="entry name" value="Polyphosphate_kinase"/>
    <property type="match status" value="1"/>
</dbReference>
<dbReference type="InterPro" id="IPR003414">
    <property type="entry name" value="PP_kinase"/>
</dbReference>
<dbReference type="InterPro" id="IPR041108">
    <property type="entry name" value="PP_kinase_C_1"/>
</dbReference>
<dbReference type="InterPro" id="IPR024953">
    <property type="entry name" value="PP_kinase_middle"/>
</dbReference>
<dbReference type="InterPro" id="IPR036830">
    <property type="entry name" value="PP_kinase_middle_dom_sf"/>
</dbReference>
<dbReference type="InterPro" id="IPR025200">
    <property type="entry name" value="PPK_C_dom2"/>
</dbReference>
<dbReference type="InterPro" id="IPR025198">
    <property type="entry name" value="PPK_N_dom"/>
</dbReference>
<dbReference type="InterPro" id="IPR036832">
    <property type="entry name" value="PPK_N_dom_sf"/>
</dbReference>
<dbReference type="NCBIfam" id="TIGR03705">
    <property type="entry name" value="poly_P_kin"/>
    <property type="match status" value="1"/>
</dbReference>
<dbReference type="NCBIfam" id="NF003917">
    <property type="entry name" value="PRK05443.1-1"/>
    <property type="match status" value="1"/>
</dbReference>
<dbReference type="NCBIfam" id="NF003918">
    <property type="entry name" value="PRK05443.1-2"/>
    <property type="match status" value="1"/>
</dbReference>
<dbReference type="NCBIfam" id="NF003921">
    <property type="entry name" value="PRK05443.2-2"/>
    <property type="match status" value="1"/>
</dbReference>
<dbReference type="NCBIfam" id="NF003922">
    <property type="entry name" value="PRK05443.2-3"/>
    <property type="match status" value="1"/>
</dbReference>
<dbReference type="PANTHER" id="PTHR30218">
    <property type="entry name" value="POLYPHOSPHATE KINASE"/>
    <property type="match status" value="1"/>
</dbReference>
<dbReference type="PANTHER" id="PTHR30218:SF0">
    <property type="entry name" value="POLYPHOSPHATE KINASE"/>
    <property type="match status" value="1"/>
</dbReference>
<dbReference type="Pfam" id="PF02503">
    <property type="entry name" value="PP_kinase"/>
    <property type="match status" value="1"/>
</dbReference>
<dbReference type="Pfam" id="PF13090">
    <property type="entry name" value="PP_kinase_C"/>
    <property type="match status" value="1"/>
</dbReference>
<dbReference type="Pfam" id="PF17941">
    <property type="entry name" value="PP_kinase_C_1"/>
    <property type="match status" value="1"/>
</dbReference>
<dbReference type="Pfam" id="PF13089">
    <property type="entry name" value="PP_kinase_N"/>
    <property type="match status" value="1"/>
</dbReference>
<dbReference type="PIRSF" id="PIRSF015589">
    <property type="entry name" value="PP_kinase"/>
    <property type="match status" value="1"/>
</dbReference>
<dbReference type="SUPFAM" id="SSF56024">
    <property type="entry name" value="Phospholipase D/nuclease"/>
    <property type="match status" value="2"/>
</dbReference>
<dbReference type="SUPFAM" id="SSF143724">
    <property type="entry name" value="PHP14-like"/>
    <property type="match status" value="1"/>
</dbReference>
<dbReference type="SUPFAM" id="SSF140356">
    <property type="entry name" value="PPK N-terminal domain-like"/>
    <property type="match status" value="1"/>
</dbReference>
<accession>P65769</accession>
<accession>A0A1R3Y2R2</accession>
<accession>P95111</accession>
<accession>X2BN16</accession>
<sequence>MMSNDRKVTEIENSPVTEVRPEEHAWYPDDSALAAPPAATPAAISDQLPSDRYLNRELSWLDFNARVLALAADKSMPLLERAKFLAIFASNLDEFYMVRVAGLKRRDEMGLSVRSADGLTPREQLGRIGEQTQQLASRHARVFLDSVLPALGEEGIYIVTWADLDQAERDRLSTYFNEQVFPVLTPLAVDPAHPFPFVSGLSLNLAVTVRQPEDGTQHFARVKVPDNVDRFVELAAREASEEAAGTEGRTALRFLPMEELIAAFLPVLFPGMEIVEHHAFRITRNADFEVEEDRDEDLLQALERELARRRFGSPVRLEIADDMTESMLELLLRELDVHPGDVIEVPGLLDLSSLWQIYAVDRPTLKDRTFVPATHPAFAERETPKSIFATLREGDVLVHHPYDSFSTSVQRFIEQAAADPNVLAIKQTLYRTSGDSPIVRALIDAAEAGKQVVALVEIKARFDEQANIAWARALEQAGVHVAYGLVGLKTHCKTALVVRREGPTIRRYCHVGTGNYNSKTARLYEDVGLLTAAPDIGADLTDLFNSLTGYSRKLSYRNLLVAPHGIRAGIIDRVEREVAAHRAEGAHNGKGRIRLKMNALVDEQVIDALYRASRAGVRIEVVVRGICALRPGAQGISENIIVRSILGRFLEHSRILHFRAIDEFWIGSADMMHRNLDRRVEVMAQVKNPRLTAQLDELFESALDPCTRCWELGPDGQWTASPQEGHSVRDHQESLMERHRSP</sequence>
<gene>
    <name evidence="1" type="primary">ppk</name>
    <name type="ordered locus">BQ2027_MB3008</name>
</gene>
<keyword id="KW-0067">ATP-binding</keyword>
<keyword id="KW-0418">Kinase</keyword>
<keyword id="KW-0460">Magnesium</keyword>
<keyword id="KW-0479">Metal-binding</keyword>
<keyword id="KW-0547">Nucleotide-binding</keyword>
<keyword id="KW-0597">Phosphoprotein</keyword>
<keyword id="KW-1185">Reference proteome</keyword>
<keyword id="KW-0808">Transferase</keyword>
<evidence type="ECO:0000255" key="1">
    <source>
        <dbReference type="HAMAP-Rule" id="MF_00347"/>
    </source>
</evidence>
<evidence type="ECO:0000256" key="2">
    <source>
        <dbReference type="SAM" id="MobiDB-lite"/>
    </source>
</evidence>
<reference key="1">
    <citation type="journal article" date="2003" name="Proc. Natl. Acad. Sci. U.S.A.">
        <title>The complete genome sequence of Mycobacterium bovis.</title>
        <authorList>
            <person name="Garnier T."/>
            <person name="Eiglmeier K."/>
            <person name="Camus J.-C."/>
            <person name="Medina N."/>
            <person name="Mansoor H."/>
            <person name="Pryor M."/>
            <person name="Duthoy S."/>
            <person name="Grondin S."/>
            <person name="Lacroix C."/>
            <person name="Monsempe C."/>
            <person name="Simon S."/>
            <person name="Harris B."/>
            <person name="Atkin R."/>
            <person name="Doggett J."/>
            <person name="Mayes R."/>
            <person name="Keating L."/>
            <person name="Wheeler P.R."/>
            <person name="Parkhill J."/>
            <person name="Barrell B.G."/>
            <person name="Cole S.T."/>
            <person name="Gordon S.V."/>
            <person name="Hewinson R.G."/>
        </authorList>
    </citation>
    <scope>NUCLEOTIDE SEQUENCE [LARGE SCALE GENOMIC DNA]</scope>
    <source>
        <strain>ATCC BAA-935 / AF2122/97</strain>
    </source>
</reference>
<reference key="2">
    <citation type="journal article" date="2017" name="Genome Announc.">
        <title>Updated reference genome sequence and annotation of Mycobacterium bovis AF2122/97.</title>
        <authorList>
            <person name="Malone K.M."/>
            <person name="Farrell D."/>
            <person name="Stuber T.P."/>
            <person name="Schubert O.T."/>
            <person name="Aebersold R."/>
            <person name="Robbe-Austerman S."/>
            <person name="Gordon S.V."/>
        </authorList>
    </citation>
    <scope>NUCLEOTIDE SEQUENCE [LARGE SCALE GENOMIC DNA]</scope>
    <scope>GENOME REANNOTATION</scope>
    <source>
        <strain>ATCC BAA-935 / AF2122/97</strain>
    </source>
</reference>
<name>PPK1_MYCBO</name>
<protein>
    <recommendedName>
        <fullName evidence="1">Polyphosphate kinase</fullName>
        <ecNumber evidence="1">2.7.4.1</ecNumber>
    </recommendedName>
    <alternativeName>
        <fullName evidence="1">ATP-polyphosphate phosphotransferase</fullName>
    </alternativeName>
    <alternativeName>
        <fullName evidence="1">Polyphosphoric acid kinase</fullName>
    </alternativeName>
</protein>
<feature type="chain" id="PRO_0000128649" description="Polyphosphate kinase">
    <location>
        <begin position="1"/>
        <end position="742"/>
    </location>
</feature>
<feature type="region of interest" description="Disordered" evidence="2">
    <location>
        <begin position="718"/>
        <end position="742"/>
    </location>
</feature>
<feature type="compositionally biased region" description="Basic and acidic residues" evidence="2">
    <location>
        <begin position="726"/>
        <end position="742"/>
    </location>
</feature>
<feature type="active site" description="Phosphohistidine intermediate" evidence="1">
    <location>
        <position position="491"/>
    </location>
</feature>
<feature type="binding site" evidence="1">
    <location>
        <position position="91"/>
    </location>
    <ligand>
        <name>ATP</name>
        <dbReference type="ChEBI" id="CHEBI:30616"/>
    </ligand>
</feature>
<feature type="binding site" evidence="1">
    <location>
        <position position="431"/>
    </location>
    <ligand>
        <name>Mg(2+)</name>
        <dbReference type="ChEBI" id="CHEBI:18420"/>
    </ligand>
</feature>
<feature type="binding site" evidence="1">
    <location>
        <position position="461"/>
    </location>
    <ligand>
        <name>Mg(2+)</name>
        <dbReference type="ChEBI" id="CHEBI:18420"/>
    </ligand>
</feature>
<feature type="binding site" evidence="1">
    <location>
        <position position="524"/>
    </location>
    <ligand>
        <name>ATP</name>
        <dbReference type="ChEBI" id="CHEBI:30616"/>
    </ligand>
</feature>
<feature type="binding site" evidence="1">
    <location>
        <position position="624"/>
    </location>
    <ligand>
        <name>ATP</name>
        <dbReference type="ChEBI" id="CHEBI:30616"/>
    </ligand>
</feature>
<feature type="binding site" evidence="1">
    <location>
        <position position="652"/>
    </location>
    <ligand>
        <name>ATP</name>
        <dbReference type="ChEBI" id="CHEBI:30616"/>
    </ligand>
</feature>